<reference key="1">
    <citation type="journal article" date="2001" name="Nature">
        <title>Genome sequence of Yersinia pestis, the causative agent of plague.</title>
        <authorList>
            <person name="Parkhill J."/>
            <person name="Wren B.W."/>
            <person name="Thomson N.R."/>
            <person name="Titball R.W."/>
            <person name="Holden M.T.G."/>
            <person name="Prentice M.B."/>
            <person name="Sebaihia M."/>
            <person name="James K.D."/>
            <person name="Churcher C.M."/>
            <person name="Mungall K.L."/>
            <person name="Baker S."/>
            <person name="Basham D."/>
            <person name="Bentley S.D."/>
            <person name="Brooks K."/>
            <person name="Cerdeno-Tarraga A.-M."/>
            <person name="Chillingworth T."/>
            <person name="Cronin A."/>
            <person name="Davies R.M."/>
            <person name="Davis P."/>
            <person name="Dougan G."/>
            <person name="Feltwell T."/>
            <person name="Hamlin N."/>
            <person name="Holroyd S."/>
            <person name="Jagels K."/>
            <person name="Karlyshev A.V."/>
            <person name="Leather S."/>
            <person name="Moule S."/>
            <person name="Oyston P.C.F."/>
            <person name="Quail M.A."/>
            <person name="Rutherford K.M."/>
            <person name="Simmonds M."/>
            <person name="Skelton J."/>
            <person name="Stevens K."/>
            <person name="Whitehead S."/>
            <person name="Barrell B.G."/>
        </authorList>
    </citation>
    <scope>NUCLEOTIDE SEQUENCE [LARGE SCALE GENOMIC DNA]</scope>
    <source>
        <strain>CO-92 / Biovar Orientalis</strain>
    </source>
</reference>
<reference key="2">
    <citation type="journal article" date="2002" name="J. Bacteriol.">
        <title>Genome sequence of Yersinia pestis KIM.</title>
        <authorList>
            <person name="Deng W."/>
            <person name="Burland V."/>
            <person name="Plunkett G. III"/>
            <person name="Boutin A."/>
            <person name="Mayhew G.F."/>
            <person name="Liss P."/>
            <person name="Perna N.T."/>
            <person name="Rose D.J."/>
            <person name="Mau B."/>
            <person name="Zhou S."/>
            <person name="Schwartz D.C."/>
            <person name="Fetherston J.D."/>
            <person name="Lindler L.E."/>
            <person name="Brubaker R.R."/>
            <person name="Plano G.V."/>
            <person name="Straley S.C."/>
            <person name="McDonough K.A."/>
            <person name="Nilles M.L."/>
            <person name="Matson J.S."/>
            <person name="Blattner F.R."/>
            <person name="Perry R.D."/>
        </authorList>
    </citation>
    <scope>NUCLEOTIDE SEQUENCE [LARGE SCALE GENOMIC DNA]</scope>
    <source>
        <strain>KIM10+ / Biovar Mediaevalis</strain>
    </source>
</reference>
<reference key="3">
    <citation type="journal article" date="2004" name="DNA Res.">
        <title>Complete genome sequence of Yersinia pestis strain 91001, an isolate avirulent to humans.</title>
        <authorList>
            <person name="Song Y."/>
            <person name="Tong Z."/>
            <person name="Wang J."/>
            <person name="Wang L."/>
            <person name="Guo Z."/>
            <person name="Han Y."/>
            <person name="Zhang J."/>
            <person name="Pei D."/>
            <person name="Zhou D."/>
            <person name="Qin H."/>
            <person name="Pang X."/>
            <person name="Han Y."/>
            <person name="Zhai J."/>
            <person name="Li M."/>
            <person name="Cui B."/>
            <person name="Qi Z."/>
            <person name="Jin L."/>
            <person name="Dai R."/>
            <person name="Chen F."/>
            <person name="Li S."/>
            <person name="Ye C."/>
            <person name="Du Z."/>
            <person name="Lin W."/>
            <person name="Wang J."/>
            <person name="Yu J."/>
            <person name="Yang H."/>
            <person name="Wang J."/>
            <person name="Huang P."/>
            <person name="Yang R."/>
        </authorList>
    </citation>
    <scope>NUCLEOTIDE SEQUENCE [LARGE SCALE GENOMIC DNA]</scope>
    <source>
        <strain>91001 / Biovar Mediaevalis</strain>
    </source>
</reference>
<gene>
    <name evidence="1" type="primary">prmC</name>
    <name type="synonym">hemK</name>
    <name type="ordered locus">YPO2018</name>
    <name type="ordered locus">y2289</name>
    <name type="ordered locus">YP_1866</name>
</gene>
<name>PRMC_YERPE</name>
<proteinExistence type="inferred from homology"/>
<dbReference type="EC" id="2.1.1.297" evidence="1"/>
<dbReference type="EMBL" id="AL590842">
    <property type="protein sequence ID" value="CAL20655.1"/>
    <property type="molecule type" value="Genomic_DNA"/>
</dbReference>
<dbReference type="EMBL" id="AE009952">
    <property type="protein sequence ID" value="AAM85848.1"/>
    <property type="molecule type" value="Genomic_DNA"/>
</dbReference>
<dbReference type="EMBL" id="AE017042">
    <property type="protein sequence ID" value="AAS62086.1"/>
    <property type="molecule type" value="Genomic_DNA"/>
</dbReference>
<dbReference type="PIR" id="AD0246">
    <property type="entry name" value="AD0246"/>
</dbReference>
<dbReference type="RefSeq" id="WP_002211235.1">
    <property type="nucleotide sequence ID" value="NZ_WUCM01000039.1"/>
</dbReference>
<dbReference type="RefSeq" id="YP_002347004.1">
    <property type="nucleotide sequence ID" value="NC_003143.1"/>
</dbReference>
<dbReference type="SMR" id="Q7CIA2"/>
<dbReference type="IntAct" id="Q7CIA2">
    <property type="interactions" value="8"/>
</dbReference>
<dbReference type="STRING" id="214092.YPO2018"/>
<dbReference type="PaxDb" id="214092-YPO2018"/>
<dbReference type="DNASU" id="1147236"/>
<dbReference type="EnsemblBacteria" id="AAS62086">
    <property type="protein sequence ID" value="AAS62086"/>
    <property type="gene ID" value="YP_1866"/>
</dbReference>
<dbReference type="GeneID" id="57976643"/>
<dbReference type="KEGG" id="ype:YPO2018"/>
<dbReference type="KEGG" id="ypk:y2289"/>
<dbReference type="KEGG" id="ypm:YP_1866"/>
<dbReference type="PATRIC" id="fig|214092.21.peg.2403"/>
<dbReference type="eggNOG" id="COG2890">
    <property type="taxonomic scope" value="Bacteria"/>
</dbReference>
<dbReference type="HOGENOM" id="CLU_018398_3_0_6"/>
<dbReference type="OMA" id="DFDARYW"/>
<dbReference type="OrthoDB" id="9800643at2"/>
<dbReference type="Proteomes" id="UP000000815">
    <property type="component" value="Chromosome"/>
</dbReference>
<dbReference type="Proteomes" id="UP000001019">
    <property type="component" value="Chromosome"/>
</dbReference>
<dbReference type="Proteomes" id="UP000002490">
    <property type="component" value="Chromosome"/>
</dbReference>
<dbReference type="GO" id="GO:0003676">
    <property type="term" value="F:nucleic acid binding"/>
    <property type="evidence" value="ECO:0007669"/>
    <property type="project" value="InterPro"/>
</dbReference>
<dbReference type="GO" id="GO:0102559">
    <property type="term" value="F:protein-(glutamine-N5) methyltransferase activity"/>
    <property type="evidence" value="ECO:0007669"/>
    <property type="project" value="UniProtKB-EC"/>
</dbReference>
<dbReference type="GO" id="GO:0036009">
    <property type="term" value="F:protein-glutamine N-methyltransferase activity"/>
    <property type="evidence" value="ECO:0000318"/>
    <property type="project" value="GO_Central"/>
</dbReference>
<dbReference type="GO" id="GO:0032259">
    <property type="term" value="P:methylation"/>
    <property type="evidence" value="ECO:0007669"/>
    <property type="project" value="UniProtKB-KW"/>
</dbReference>
<dbReference type="GO" id="GO:0006415">
    <property type="term" value="P:translational termination"/>
    <property type="evidence" value="ECO:0000318"/>
    <property type="project" value="GO_Central"/>
</dbReference>
<dbReference type="CDD" id="cd02440">
    <property type="entry name" value="AdoMet_MTases"/>
    <property type="match status" value="1"/>
</dbReference>
<dbReference type="FunFam" id="1.10.8.10:FF:000032">
    <property type="entry name" value="Release factor glutamine methyltransferase"/>
    <property type="match status" value="1"/>
</dbReference>
<dbReference type="FunFam" id="3.40.50.150:FF:000053">
    <property type="entry name" value="Release factor glutamine methyltransferase"/>
    <property type="match status" value="1"/>
</dbReference>
<dbReference type="Gene3D" id="1.10.8.10">
    <property type="entry name" value="DNA helicase RuvA subunit, C-terminal domain"/>
    <property type="match status" value="1"/>
</dbReference>
<dbReference type="Gene3D" id="3.40.50.150">
    <property type="entry name" value="Vaccinia Virus protein VP39"/>
    <property type="match status" value="1"/>
</dbReference>
<dbReference type="HAMAP" id="MF_02126">
    <property type="entry name" value="RF_methyltr_PrmC"/>
    <property type="match status" value="1"/>
</dbReference>
<dbReference type="InterPro" id="IPR002052">
    <property type="entry name" value="DNA_methylase_N6_adenine_CS"/>
</dbReference>
<dbReference type="InterPro" id="IPR004556">
    <property type="entry name" value="HemK-like"/>
</dbReference>
<dbReference type="InterPro" id="IPR025714">
    <property type="entry name" value="Methyltranfer_dom"/>
</dbReference>
<dbReference type="InterPro" id="IPR050320">
    <property type="entry name" value="N5-glutamine_MTase"/>
</dbReference>
<dbReference type="InterPro" id="IPR040758">
    <property type="entry name" value="PrmC_N"/>
</dbReference>
<dbReference type="InterPro" id="IPR019874">
    <property type="entry name" value="RF_methyltr_PrmC"/>
</dbReference>
<dbReference type="InterPro" id="IPR029063">
    <property type="entry name" value="SAM-dependent_MTases_sf"/>
</dbReference>
<dbReference type="NCBIfam" id="TIGR00536">
    <property type="entry name" value="hemK_fam"/>
    <property type="match status" value="1"/>
</dbReference>
<dbReference type="NCBIfam" id="TIGR03534">
    <property type="entry name" value="RF_mod_PrmC"/>
    <property type="match status" value="1"/>
</dbReference>
<dbReference type="PANTHER" id="PTHR18895">
    <property type="entry name" value="HEMK METHYLTRANSFERASE"/>
    <property type="match status" value="1"/>
</dbReference>
<dbReference type="PANTHER" id="PTHR18895:SF74">
    <property type="entry name" value="MTRF1L RELEASE FACTOR GLUTAMINE METHYLTRANSFERASE"/>
    <property type="match status" value="1"/>
</dbReference>
<dbReference type="Pfam" id="PF13847">
    <property type="entry name" value="Methyltransf_31"/>
    <property type="match status" value="1"/>
</dbReference>
<dbReference type="Pfam" id="PF17827">
    <property type="entry name" value="PrmC_N"/>
    <property type="match status" value="1"/>
</dbReference>
<dbReference type="SUPFAM" id="SSF53335">
    <property type="entry name" value="S-adenosyl-L-methionine-dependent methyltransferases"/>
    <property type="match status" value="1"/>
</dbReference>
<accession>Q7CIA2</accession>
<accession>Q74U75</accession>
<keyword id="KW-0489">Methyltransferase</keyword>
<keyword id="KW-1185">Reference proteome</keyword>
<keyword id="KW-0949">S-adenosyl-L-methionine</keyword>
<keyword id="KW-0808">Transferase</keyword>
<sequence length="276" mass="30121">MNYQHWLSLAAARFTHSDSPKRDAEILLSFVTGKARTYLLAFGETEITAEQLLWLETLANRREQGEPIAYLVGEREFWSLPLSVSSATLIPRPDTECLVEQALARLPAMPCRILDLGTGTGAIALALATERRDCAVIAVDINADAVALARHNAEKLTIDNVCFLQGSWFEPVSGRFALIASNPPYIDANDPHLNEGDVRYEPHSALVAAAEGMADLAAIVSQAPGYLDPGGWLMLEHGWQQANAVQELLKNSGFSAVMTCKDYGNNDRVTLGQWAV</sequence>
<organism>
    <name type="scientific">Yersinia pestis</name>
    <dbReference type="NCBI Taxonomy" id="632"/>
    <lineage>
        <taxon>Bacteria</taxon>
        <taxon>Pseudomonadati</taxon>
        <taxon>Pseudomonadota</taxon>
        <taxon>Gammaproteobacteria</taxon>
        <taxon>Enterobacterales</taxon>
        <taxon>Yersiniaceae</taxon>
        <taxon>Yersinia</taxon>
    </lineage>
</organism>
<protein>
    <recommendedName>
        <fullName evidence="1">Release factor glutamine methyltransferase</fullName>
        <shortName evidence="1">RF MTase</shortName>
        <ecNumber evidence="1">2.1.1.297</ecNumber>
    </recommendedName>
    <alternativeName>
        <fullName evidence="1">N5-glutamine methyltransferase PrmC</fullName>
    </alternativeName>
    <alternativeName>
        <fullName evidence="1">Protein-(glutamine-N5) MTase PrmC</fullName>
    </alternativeName>
    <alternativeName>
        <fullName evidence="1">Protein-glutamine N-methyltransferase PrmC</fullName>
    </alternativeName>
</protein>
<comment type="function">
    <text evidence="1">Methylates the class 1 translation termination release factors RF1/PrfA and RF2/PrfB on the glutamine residue of the universally conserved GGQ motif.</text>
</comment>
<comment type="catalytic activity">
    <reaction evidence="1">
        <text>L-glutaminyl-[peptide chain release factor] + S-adenosyl-L-methionine = N(5)-methyl-L-glutaminyl-[peptide chain release factor] + S-adenosyl-L-homocysteine + H(+)</text>
        <dbReference type="Rhea" id="RHEA:42896"/>
        <dbReference type="Rhea" id="RHEA-COMP:10271"/>
        <dbReference type="Rhea" id="RHEA-COMP:10272"/>
        <dbReference type="ChEBI" id="CHEBI:15378"/>
        <dbReference type="ChEBI" id="CHEBI:30011"/>
        <dbReference type="ChEBI" id="CHEBI:57856"/>
        <dbReference type="ChEBI" id="CHEBI:59789"/>
        <dbReference type="ChEBI" id="CHEBI:61891"/>
        <dbReference type="EC" id="2.1.1.297"/>
    </reaction>
</comment>
<comment type="similarity">
    <text evidence="1">Belongs to the protein N5-glutamine methyltransferase family. PrmC subfamily.</text>
</comment>
<feature type="chain" id="PRO_0000414551" description="Release factor glutamine methyltransferase">
    <location>
        <begin position="1"/>
        <end position="276"/>
    </location>
</feature>
<feature type="binding site" evidence="1">
    <location>
        <begin position="117"/>
        <end position="121"/>
    </location>
    <ligand>
        <name>S-adenosyl-L-methionine</name>
        <dbReference type="ChEBI" id="CHEBI:59789"/>
    </ligand>
</feature>
<feature type="binding site" evidence="1">
    <location>
        <position position="140"/>
    </location>
    <ligand>
        <name>S-adenosyl-L-methionine</name>
        <dbReference type="ChEBI" id="CHEBI:59789"/>
    </ligand>
</feature>
<feature type="binding site" evidence="1">
    <location>
        <position position="168"/>
    </location>
    <ligand>
        <name>S-adenosyl-L-methionine</name>
        <dbReference type="ChEBI" id="CHEBI:59789"/>
    </ligand>
</feature>
<feature type="binding site" evidence="1">
    <location>
        <begin position="182"/>
        <end position="185"/>
    </location>
    <ligand>
        <name>substrate</name>
    </ligand>
</feature>
<feature type="binding site" evidence="1">
    <location>
        <position position="182"/>
    </location>
    <ligand>
        <name>S-adenosyl-L-methionine</name>
        <dbReference type="ChEBI" id="CHEBI:59789"/>
    </ligand>
</feature>
<evidence type="ECO:0000255" key="1">
    <source>
        <dbReference type="HAMAP-Rule" id="MF_02126"/>
    </source>
</evidence>